<gene>
    <name type="primary">rrg9</name>
    <name type="ORF">ACLA_071220</name>
</gene>
<name>RRG9_ASPCL</name>
<feature type="transit peptide" description="Mitochondrion" evidence="2">
    <location>
        <begin position="1"/>
        <end status="unknown"/>
    </location>
</feature>
<feature type="chain" id="PRO_0000407936" description="Required for respiratory growth protein 9, mitochondrial">
    <location>
        <begin status="unknown"/>
        <end position="285"/>
    </location>
</feature>
<feature type="region of interest" description="Disordered" evidence="3">
    <location>
        <begin position="89"/>
        <end position="165"/>
    </location>
</feature>
<feature type="compositionally biased region" description="Polar residues" evidence="3">
    <location>
        <begin position="89"/>
        <end position="128"/>
    </location>
</feature>
<feature type="compositionally biased region" description="Polar residues" evidence="3">
    <location>
        <begin position="137"/>
        <end position="149"/>
    </location>
</feature>
<keyword id="KW-0496">Mitochondrion</keyword>
<keyword id="KW-1185">Reference proteome</keyword>
<keyword id="KW-0809">Transit peptide</keyword>
<sequence>MSNICVASSKLNLPTLLRSVFRSEFTAELRPQQEPKSLFLTRPTLFTYRRVRDGRHFSSLTRSLEFQSRSPVSSHSSLLVATDVCSTPQPSESVKLSNDQVSVSHATDSTGAISTRQSANNKKGSGTRATPDLMATESDSSKTSRSQGPRVSALSSLAKSNKKRETWQIQKDALKKKFKEGWNPPKKLSPDALDGIRHLHSVAPDRFTASVLAEQFQVSPEAIRRILKSKWRPSAEEMEERRERWDRRHDRIWSQMTELGLRPKSRRANQYSDAKVLYDDSGKQE</sequence>
<dbReference type="EMBL" id="DS027045">
    <property type="protein sequence ID" value="EAW14089.1"/>
    <property type="molecule type" value="Genomic_DNA"/>
</dbReference>
<dbReference type="RefSeq" id="XP_001275515.1">
    <property type="nucleotide sequence ID" value="XM_001275514.1"/>
</dbReference>
<dbReference type="EnsemblFungi" id="EAW14089">
    <property type="protein sequence ID" value="EAW14089"/>
    <property type="gene ID" value="ACLA_071220"/>
</dbReference>
<dbReference type="GeneID" id="4708252"/>
<dbReference type="KEGG" id="act:ACLA_071220"/>
<dbReference type="VEuPathDB" id="FungiDB:ACLA_071220"/>
<dbReference type="eggNOG" id="ENOG502S7IA">
    <property type="taxonomic scope" value="Eukaryota"/>
</dbReference>
<dbReference type="HOGENOM" id="CLU_047598_3_0_1"/>
<dbReference type="OMA" id="KPEKWQI"/>
<dbReference type="OrthoDB" id="5578174at2759"/>
<dbReference type="Proteomes" id="UP000006701">
    <property type="component" value="Unassembled WGS sequence"/>
</dbReference>
<dbReference type="GO" id="GO:0005739">
    <property type="term" value="C:mitochondrion"/>
    <property type="evidence" value="ECO:0007669"/>
    <property type="project" value="UniProtKB-SubCell"/>
</dbReference>
<dbReference type="GO" id="GO:0005634">
    <property type="term" value="C:nucleus"/>
    <property type="evidence" value="ECO:0007669"/>
    <property type="project" value="TreeGrafter"/>
</dbReference>
<dbReference type="InterPro" id="IPR010487">
    <property type="entry name" value="NGRN/Rrg9"/>
</dbReference>
<dbReference type="PANTHER" id="PTHR13475">
    <property type="entry name" value="NEUGRIN"/>
    <property type="match status" value="1"/>
</dbReference>
<dbReference type="PANTHER" id="PTHR13475:SF3">
    <property type="entry name" value="NEUGRIN"/>
    <property type="match status" value="1"/>
</dbReference>
<dbReference type="Pfam" id="PF06413">
    <property type="entry name" value="Neugrin"/>
    <property type="match status" value="1"/>
</dbReference>
<protein>
    <recommendedName>
        <fullName>Required for respiratory growth protein 9, mitochondrial</fullName>
    </recommendedName>
</protein>
<reference key="1">
    <citation type="journal article" date="2008" name="PLoS Genet.">
        <title>Genomic islands in the pathogenic filamentous fungus Aspergillus fumigatus.</title>
        <authorList>
            <person name="Fedorova N.D."/>
            <person name="Khaldi N."/>
            <person name="Joardar V.S."/>
            <person name="Maiti R."/>
            <person name="Amedeo P."/>
            <person name="Anderson M.J."/>
            <person name="Crabtree J."/>
            <person name="Silva J.C."/>
            <person name="Badger J.H."/>
            <person name="Albarraq A."/>
            <person name="Angiuoli S."/>
            <person name="Bussey H."/>
            <person name="Bowyer P."/>
            <person name="Cotty P.J."/>
            <person name="Dyer P.S."/>
            <person name="Egan A."/>
            <person name="Galens K."/>
            <person name="Fraser-Liggett C.M."/>
            <person name="Haas B.J."/>
            <person name="Inman J.M."/>
            <person name="Kent R."/>
            <person name="Lemieux S."/>
            <person name="Malavazi I."/>
            <person name="Orvis J."/>
            <person name="Roemer T."/>
            <person name="Ronning C.M."/>
            <person name="Sundaram J.P."/>
            <person name="Sutton G."/>
            <person name="Turner G."/>
            <person name="Venter J.C."/>
            <person name="White O.R."/>
            <person name="Whitty B.R."/>
            <person name="Youngman P."/>
            <person name="Wolfe K.H."/>
            <person name="Goldman G.H."/>
            <person name="Wortman J.R."/>
            <person name="Jiang B."/>
            <person name="Denning D.W."/>
            <person name="Nierman W.C."/>
        </authorList>
    </citation>
    <scope>NUCLEOTIDE SEQUENCE [LARGE SCALE GENOMIC DNA]</scope>
    <source>
        <strain>ATCC 1007 / CBS 513.65 / DSM 816 / NCTC 3887 / NRRL 1 / QM 1276 / 107</strain>
    </source>
</reference>
<comment type="function">
    <text evidence="1">Required for respiratory activity and maintenance and expression of the mitochondrial genome.</text>
</comment>
<comment type="subcellular location">
    <subcellularLocation>
        <location evidence="1">Mitochondrion</location>
    </subcellularLocation>
</comment>
<comment type="similarity">
    <text evidence="4">Belongs to the RRG9 family.</text>
</comment>
<proteinExistence type="inferred from homology"/>
<organism>
    <name type="scientific">Aspergillus clavatus (strain ATCC 1007 / CBS 513.65 / DSM 816 / NCTC 3887 / NRRL 1 / QM 1276 / 107)</name>
    <dbReference type="NCBI Taxonomy" id="344612"/>
    <lineage>
        <taxon>Eukaryota</taxon>
        <taxon>Fungi</taxon>
        <taxon>Dikarya</taxon>
        <taxon>Ascomycota</taxon>
        <taxon>Pezizomycotina</taxon>
        <taxon>Eurotiomycetes</taxon>
        <taxon>Eurotiomycetidae</taxon>
        <taxon>Eurotiales</taxon>
        <taxon>Aspergillaceae</taxon>
        <taxon>Aspergillus</taxon>
        <taxon>Aspergillus subgen. Fumigati</taxon>
    </lineage>
</organism>
<accession>A1C6R8</accession>
<evidence type="ECO:0000250" key="1"/>
<evidence type="ECO:0000255" key="2"/>
<evidence type="ECO:0000256" key="3">
    <source>
        <dbReference type="SAM" id="MobiDB-lite"/>
    </source>
</evidence>
<evidence type="ECO:0000305" key="4"/>